<reference key="1">
    <citation type="journal article" date="1998" name="Nature">
        <title>The complete genome of the hyperthermophilic bacterium Aquifex aeolicus.</title>
        <authorList>
            <person name="Deckert G."/>
            <person name="Warren P.V."/>
            <person name="Gaasterland T."/>
            <person name="Young W.G."/>
            <person name="Lenox A.L."/>
            <person name="Graham D.E."/>
            <person name="Overbeek R."/>
            <person name="Snead M.A."/>
            <person name="Keller M."/>
            <person name="Aujay M."/>
            <person name="Huber R."/>
            <person name="Feldman R.A."/>
            <person name="Short J.M."/>
            <person name="Olsen G.J."/>
            <person name="Swanson R.V."/>
        </authorList>
    </citation>
    <scope>NUCLEOTIDE SEQUENCE [LARGE SCALE GENOMIC DNA]</scope>
    <source>
        <strain>VF5</strain>
    </source>
</reference>
<accession>O67386</accession>
<comment type="function">
    <text evidence="1">NDH-1 shuttles electrons from NADH, via FMN and iron-sulfur (Fe-S) centers, to quinones in the respiratory chain. The immediate electron acceptor for the enzyme in this species is believed to be ubiquinone. Couples the redox reaction to proton translocation (for every two electrons transferred, four hydrogen ions are translocated across the cytoplasmic membrane), and thus conserves the redox energy in a proton gradient.</text>
</comment>
<comment type="catalytic activity">
    <reaction evidence="1">
        <text>a quinone + NADH + 5 H(+)(in) = a quinol + NAD(+) + 4 H(+)(out)</text>
        <dbReference type="Rhea" id="RHEA:57888"/>
        <dbReference type="ChEBI" id="CHEBI:15378"/>
        <dbReference type="ChEBI" id="CHEBI:24646"/>
        <dbReference type="ChEBI" id="CHEBI:57540"/>
        <dbReference type="ChEBI" id="CHEBI:57945"/>
        <dbReference type="ChEBI" id="CHEBI:132124"/>
    </reaction>
</comment>
<comment type="cofactor">
    <cofactor evidence="1">
        <name>[4Fe-4S] cluster</name>
        <dbReference type="ChEBI" id="CHEBI:49883"/>
    </cofactor>
    <text evidence="1">Binds 2 [4Fe-4S] clusters per subunit.</text>
</comment>
<comment type="subunit">
    <text evidence="1">NDH-1 is composed of 14 different subunits. Subunits NuoA, H, J, K, L, M, N constitute the membrane sector of the complex.</text>
</comment>
<comment type="subcellular location">
    <subcellularLocation>
        <location evidence="1">Cell inner membrane</location>
        <topology evidence="1">Peripheral membrane protein</topology>
    </subcellularLocation>
</comment>
<comment type="similarity">
    <text evidence="1">Belongs to the complex I 23 kDa subunit family.</text>
</comment>
<dbReference type="EC" id="7.1.1.-" evidence="1"/>
<dbReference type="EMBL" id="AE000657">
    <property type="protein sequence ID" value="AAC07349.1"/>
    <property type="molecule type" value="Genomic_DNA"/>
</dbReference>
<dbReference type="PIR" id="G70419">
    <property type="entry name" value="G70419"/>
</dbReference>
<dbReference type="RefSeq" id="NP_213950.1">
    <property type="nucleotide sequence ID" value="NC_000918.1"/>
</dbReference>
<dbReference type="RefSeq" id="WP_010880888.1">
    <property type="nucleotide sequence ID" value="NC_000918.1"/>
</dbReference>
<dbReference type="SMR" id="O67386"/>
<dbReference type="FunCoup" id="O67386">
    <property type="interactions" value="325"/>
</dbReference>
<dbReference type="STRING" id="224324.aq_1375"/>
<dbReference type="EnsemblBacteria" id="AAC07349">
    <property type="protein sequence ID" value="AAC07349"/>
    <property type="gene ID" value="aq_1375"/>
</dbReference>
<dbReference type="KEGG" id="aae:aq_1375"/>
<dbReference type="PATRIC" id="fig|224324.8.peg.1077"/>
<dbReference type="eggNOG" id="COG1143">
    <property type="taxonomic scope" value="Bacteria"/>
</dbReference>
<dbReference type="HOGENOM" id="CLU_067218_4_3_0"/>
<dbReference type="InParanoid" id="O67386"/>
<dbReference type="OrthoDB" id="9798098at2"/>
<dbReference type="Proteomes" id="UP000000798">
    <property type="component" value="Chromosome"/>
</dbReference>
<dbReference type="GO" id="GO:0005886">
    <property type="term" value="C:plasma membrane"/>
    <property type="evidence" value="ECO:0007669"/>
    <property type="project" value="UniProtKB-SubCell"/>
</dbReference>
<dbReference type="GO" id="GO:0051539">
    <property type="term" value="F:4 iron, 4 sulfur cluster binding"/>
    <property type="evidence" value="ECO:0007669"/>
    <property type="project" value="UniProtKB-KW"/>
</dbReference>
<dbReference type="GO" id="GO:0005506">
    <property type="term" value="F:iron ion binding"/>
    <property type="evidence" value="ECO:0007669"/>
    <property type="project" value="UniProtKB-UniRule"/>
</dbReference>
<dbReference type="GO" id="GO:0050136">
    <property type="term" value="F:NADH:ubiquinone reductase (non-electrogenic) activity"/>
    <property type="evidence" value="ECO:0007669"/>
    <property type="project" value="UniProtKB-UniRule"/>
</dbReference>
<dbReference type="GO" id="GO:0048038">
    <property type="term" value="F:quinone binding"/>
    <property type="evidence" value="ECO:0007669"/>
    <property type="project" value="UniProtKB-KW"/>
</dbReference>
<dbReference type="FunFam" id="3.30.70.3270:FF:000018">
    <property type="entry name" value="NADH-quinone oxidoreductase subunit I 2"/>
    <property type="match status" value="1"/>
</dbReference>
<dbReference type="Gene3D" id="3.30.70.3270">
    <property type="match status" value="1"/>
</dbReference>
<dbReference type="HAMAP" id="MF_01351">
    <property type="entry name" value="NDH1_NuoI"/>
    <property type="match status" value="1"/>
</dbReference>
<dbReference type="InterPro" id="IPR017896">
    <property type="entry name" value="4Fe4S_Fe-S-bd"/>
</dbReference>
<dbReference type="InterPro" id="IPR017900">
    <property type="entry name" value="4Fe4S_Fe_S_CS"/>
</dbReference>
<dbReference type="InterPro" id="IPR010226">
    <property type="entry name" value="NADH_quinone_OxRdtase_chainI"/>
</dbReference>
<dbReference type="PANTHER" id="PTHR10849">
    <property type="entry name" value="NADH DEHYDROGENASE UBIQUINONE IRON-SULFUR PROTEIN 8, MITOCHONDRIAL"/>
    <property type="match status" value="1"/>
</dbReference>
<dbReference type="PANTHER" id="PTHR10849:SF24">
    <property type="entry name" value="NADH-QUINONE OXIDOREDUCTASE SUBUNIT I 2"/>
    <property type="match status" value="1"/>
</dbReference>
<dbReference type="Pfam" id="PF12838">
    <property type="entry name" value="Fer4_7"/>
    <property type="match status" value="1"/>
</dbReference>
<dbReference type="SUPFAM" id="SSF54862">
    <property type="entry name" value="4Fe-4S ferredoxins"/>
    <property type="match status" value="1"/>
</dbReference>
<dbReference type="PROSITE" id="PS00198">
    <property type="entry name" value="4FE4S_FER_1"/>
    <property type="match status" value="2"/>
</dbReference>
<dbReference type="PROSITE" id="PS51379">
    <property type="entry name" value="4FE4S_FER_2"/>
    <property type="match status" value="2"/>
</dbReference>
<organism>
    <name type="scientific">Aquifex aeolicus (strain VF5)</name>
    <dbReference type="NCBI Taxonomy" id="224324"/>
    <lineage>
        <taxon>Bacteria</taxon>
        <taxon>Pseudomonadati</taxon>
        <taxon>Aquificota</taxon>
        <taxon>Aquificia</taxon>
        <taxon>Aquificales</taxon>
        <taxon>Aquificaceae</taxon>
        <taxon>Aquifex</taxon>
    </lineage>
</organism>
<proteinExistence type="inferred from homology"/>
<gene>
    <name evidence="1" type="primary">nuoI2</name>
    <name type="ordered locus">aq_1375</name>
</gene>
<name>NUOI2_AQUAE</name>
<sequence length="208" mass="24572">MIKKVAAKPLSWLERIFFIDFIKGLRITLKNALRKTITTHYPYEKITPPKRFRGYFAHKVVDGTEPQPAFQEWVNRYNILVEYGKSRCVVCLRCKRACPVPQLFEIEGKKLPNGKRVVSVFNMNMLLCTYCGFCVDACPVDCLYQTDIHENASYTRKDAVLTLEILEQIGRDWQRRREREPDRIWIDDEQRMKLWGENNVKLPKPEEV</sequence>
<evidence type="ECO:0000255" key="1">
    <source>
        <dbReference type="HAMAP-Rule" id="MF_01351"/>
    </source>
</evidence>
<keyword id="KW-0004">4Fe-4S</keyword>
<keyword id="KW-0997">Cell inner membrane</keyword>
<keyword id="KW-1003">Cell membrane</keyword>
<keyword id="KW-0408">Iron</keyword>
<keyword id="KW-0411">Iron-sulfur</keyword>
<keyword id="KW-0472">Membrane</keyword>
<keyword id="KW-0479">Metal-binding</keyword>
<keyword id="KW-0520">NAD</keyword>
<keyword id="KW-0874">Quinone</keyword>
<keyword id="KW-1185">Reference proteome</keyword>
<keyword id="KW-0677">Repeat</keyword>
<keyword id="KW-1278">Translocase</keyword>
<keyword id="KW-0830">Ubiquinone</keyword>
<protein>
    <recommendedName>
        <fullName evidence="1">NADH-quinone oxidoreductase subunit I 2</fullName>
        <ecNumber evidence="1">7.1.1.-</ecNumber>
    </recommendedName>
    <alternativeName>
        <fullName evidence="1">NADH dehydrogenase I subunit I 2</fullName>
    </alternativeName>
    <alternativeName>
        <fullName evidence="1">NDH-1 subunit I 2</fullName>
    </alternativeName>
</protein>
<feature type="chain" id="PRO_0000298479" description="NADH-quinone oxidoreductase subunit I 2">
    <location>
        <begin position="1"/>
        <end position="208"/>
    </location>
</feature>
<feature type="domain" description="4Fe-4S ferredoxin-type 1" evidence="1">
    <location>
        <begin position="79"/>
        <end position="109"/>
    </location>
</feature>
<feature type="domain" description="4Fe-4S ferredoxin-type 2" evidence="1">
    <location>
        <begin position="119"/>
        <end position="148"/>
    </location>
</feature>
<feature type="binding site" evidence="1">
    <location>
        <position position="88"/>
    </location>
    <ligand>
        <name>[4Fe-4S] cluster</name>
        <dbReference type="ChEBI" id="CHEBI:49883"/>
        <label>1</label>
    </ligand>
</feature>
<feature type="binding site" evidence="1">
    <location>
        <position position="91"/>
    </location>
    <ligand>
        <name>[4Fe-4S] cluster</name>
        <dbReference type="ChEBI" id="CHEBI:49883"/>
        <label>1</label>
    </ligand>
</feature>
<feature type="binding site" evidence="1">
    <location>
        <position position="94"/>
    </location>
    <ligand>
        <name>[4Fe-4S] cluster</name>
        <dbReference type="ChEBI" id="CHEBI:49883"/>
        <label>1</label>
    </ligand>
</feature>
<feature type="binding site" evidence="1">
    <location>
        <position position="98"/>
    </location>
    <ligand>
        <name>[4Fe-4S] cluster</name>
        <dbReference type="ChEBI" id="CHEBI:49883"/>
        <label>2</label>
    </ligand>
</feature>
<feature type="binding site" evidence="1">
    <location>
        <position position="128"/>
    </location>
    <ligand>
        <name>[4Fe-4S] cluster</name>
        <dbReference type="ChEBI" id="CHEBI:49883"/>
        <label>2</label>
    </ligand>
</feature>
<feature type="binding site" evidence="1">
    <location>
        <position position="131"/>
    </location>
    <ligand>
        <name>[4Fe-4S] cluster</name>
        <dbReference type="ChEBI" id="CHEBI:49883"/>
        <label>2</label>
    </ligand>
</feature>
<feature type="binding site" evidence="1">
    <location>
        <position position="134"/>
    </location>
    <ligand>
        <name>[4Fe-4S] cluster</name>
        <dbReference type="ChEBI" id="CHEBI:49883"/>
        <label>2</label>
    </ligand>
</feature>
<feature type="binding site" evidence="1">
    <location>
        <position position="138"/>
    </location>
    <ligand>
        <name>[4Fe-4S] cluster</name>
        <dbReference type="ChEBI" id="CHEBI:49883"/>
        <label>1</label>
    </ligand>
</feature>